<protein>
    <recommendedName>
        <fullName evidence="1">7,8-didemethyl-8-hydroxy-5-deazariboflavin synthase</fullName>
        <ecNumber evidence="1">4.3.1.32</ecNumber>
    </recommendedName>
    <alternativeName>
        <fullName evidence="1">FO synthase subunit 1</fullName>
    </alternativeName>
</protein>
<evidence type="ECO:0000255" key="1">
    <source>
        <dbReference type="HAMAP-Rule" id="MF_01611"/>
    </source>
</evidence>
<evidence type="ECO:0000255" key="2">
    <source>
        <dbReference type="PROSITE-ProRule" id="PRU01266"/>
    </source>
</evidence>
<organism>
    <name type="scientific">Methanosarcina barkeri (strain Fusaro / DSM 804)</name>
    <dbReference type="NCBI Taxonomy" id="269797"/>
    <lineage>
        <taxon>Archaea</taxon>
        <taxon>Methanobacteriati</taxon>
        <taxon>Methanobacteriota</taxon>
        <taxon>Stenosarchaea group</taxon>
        <taxon>Methanomicrobia</taxon>
        <taxon>Methanosarcinales</taxon>
        <taxon>Methanosarcinaceae</taxon>
        <taxon>Methanosarcina</taxon>
    </lineage>
</organism>
<gene>
    <name evidence="1" type="primary">cofG</name>
    <name type="ordered locus">Mbar_A3415</name>
</gene>
<proteinExistence type="inferred from homology"/>
<comment type="function">
    <text evidence="1">Catalyzes the radical-mediated synthesis of 7,8-didemethyl-8-hydroxy-5-deazariboflavin from 5-amino-5-(4-hydroxybenzyl)-6-(D-ribitylimino)-5,6-dihydrouracil.</text>
</comment>
<comment type="catalytic activity">
    <reaction evidence="1">
        <text>5-amino-5-(4-hydroxybenzyl)-6-(D-ribitylimino)-5,6-dihydrouracil + S-adenosyl-L-methionine = 7,8-didemethyl-8-hydroxy-5-deazariboflavin + 5'-deoxyadenosine + L-methionine + NH4(+) + H(+)</text>
        <dbReference type="Rhea" id="RHEA:55204"/>
        <dbReference type="ChEBI" id="CHEBI:15378"/>
        <dbReference type="ChEBI" id="CHEBI:17319"/>
        <dbReference type="ChEBI" id="CHEBI:28938"/>
        <dbReference type="ChEBI" id="CHEBI:57844"/>
        <dbReference type="ChEBI" id="CHEBI:59789"/>
        <dbReference type="ChEBI" id="CHEBI:59904"/>
        <dbReference type="ChEBI" id="CHEBI:85936"/>
        <dbReference type="EC" id="4.3.1.32"/>
    </reaction>
</comment>
<comment type="cofactor">
    <cofactor evidence="1">
        <name>[4Fe-4S] cluster</name>
        <dbReference type="ChEBI" id="CHEBI:49883"/>
    </cofactor>
    <text evidence="1">Binds 1 [4Fe-4S] cluster. The cluster is coordinated with 3 cysteines and an exchangeable S-adenosyl-L-methionine.</text>
</comment>
<comment type="pathway">
    <text evidence="1">Cofactor biosynthesis; coenzyme F0 biosynthesis.</text>
</comment>
<comment type="subunit">
    <text evidence="1">Consists of two subunits, CofG and CofH.</text>
</comment>
<comment type="similarity">
    <text evidence="1">Belongs to the radical SAM superfamily. CofG family.</text>
</comment>
<name>COFG_METBF</name>
<sequence length="325" mass="36330">MTYSKNVFVPVTNICRNRCGYCGFRREPGQPGARLMKPEEILPVLENGAKAGCTEALFTFGEYAEEVSEYRKWLKKLGYSSTLEYLLFLCEASIDIGILPHTNAGIMTRTELKALKPLNASMGLMLESTATLDAHKDCPGKLPELRLNTIREAGKLQIPYTTGLLIGIGEIREDRIESLEAIAGLHREYGHIQEVIIQNFAPKPGTPMENFPAPSIEEIIDTICLARQILPSDIAVQVAPNLIDPKALIAKGVTDLGGISPLTIDWINPEAEWPDIKELQRKLSPILLKERLPIYPQYVRKKWYSDRIGGLIEQLSDTDGYRKKP</sequence>
<reference key="1">
    <citation type="journal article" date="2006" name="J. Bacteriol.">
        <title>The Methanosarcina barkeri genome: comparative analysis with Methanosarcina acetivorans and Methanosarcina mazei reveals extensive rearrangement within methanosarcinal genomes.</title>
        <authorList>
            <person name="Maeder D.L."/>
            <person name="Anderson I."/>
            <person name="Brettin T.S."/>
            <person name="Bruce D.C."/>
            <person name="Gilna P."/>
            <person name="Han C.S."/>
            <person name="Lapidus A."/>
            <person name="Metcalf W.W."/>
            <person name="Saunders E."/>
            <person name="Tapia R."/>
            <person name="Sowers K.R."/>
        </authorList>
    </citation>
    <scope>NUCLEOTIDE SEQUENCE [LARGE SCALE GENOMIC DNA]</scope>
    <source>
        <strain>Fusaro / DSM 804</strain>
    </source>
</reference>
<keyword id="KW-0004">4Fe-4S</keyword>
<keyword id="KW-0408">Iron</keyword>
<keyword id="KW-0411">Iron-sulfur</keyword>
<keyword id="KW-0456">Lyase</keyword>
<keyword id="KW-0479">Metal-binding</keyword>
<keyword id="KW-0949">S-adenosyl-L-methionine</keyword>
<feature type="chain" id="PRO_0000291715" description="7,8-didemethyl-8-hydroxy-5-deazariboflavin synthase">
    <location>
        <begin position="1"/>
        <end position="325"/>
    </location>
</feature>
<feature type="domain" description="Radical SAM core" evidence="2">
    <location>
        <begin position="1"/>
        <end position="241"/>
    </location>
</feature>
<feature type="binding site" evidence="1">
    <location>
        <position position="15"/>
    </location>
    <ligand>
        <name>[4Fe-4S] cluster</name>
        <dbReference type="ChEBI" id="CHEBI:49883"/>
        <note>4Fe-4S-S-AdoMet</note>
    </ligand>
</feature>
<feature type="binding site" evidence="1">
    <location>
        <position position="19"/>
    </location>
    <ligand>
        <name>[4Fe-4S] cluster</name>
        <dbReference type="ChEBI" id="CHEBI:49883"/>
        <note>4Fe-4S-S-AdoMet</note>
    </ligand>
</feature>
<feature type="binding site" evidence="1">
    <location>
        <position position="22"/>
    </location>
    <ligand>
        <name>[4Fe-4S] cluster</name>
        <dbReference type="ChEBI" id="CHEBI:49883"/>
        <note>4Fe-4S-S-AdoMet</note>
    </ligand>
</feature>
<dbReference type="EC" id="4.3.1.32" evidence="1"/>
<dbReference type="EMBL" id="CP000099">
    <property type="protein sequence ID" value="AAZ72288.1"/>
    <property type="molecule type" value="Genomic_DNA"/>
</dbReference>
<dbReference type="SMR" id="Q466A4"/>
<dbReference type="STRING" id="269797.Mbar_A3415"/>
<dbReference type="PaxDb" id="269797-Mbar_A3415"/>
<dbReference type="KEGG" id="mba:Mbar_A3415"/>
<dbReference type="eggNOG" id="arCOG00657">
    <property type="taxonomic scope" value="Archaea"/>
</dbReference>
<dbReference type="HOGENOM" id="CLU_054174_0_0_2"/>
<dbReference type="OrthoDB" id="35347at2157"/>
<dbReference type="UniPathway" id="UPA00072"/>
<dbReference type="GO" id="GO:0051539">
    <property type="term" value="F:4 iron, 4 sulfur cluster binding"/>
    <property type="evidence" value="ECO:0007669"/>
    <property type="project" value="UniProtKB-KW"/>
</dbReference>
<dbReference type="GO" id="GO:0044689">
    <property type="term" value="F:7,8-didemethyl-8-hydroxy-5-deazariboflavin synthase activity"/>
    <property type="evidence" value="ECO:0007669"/>
    <property type="project" value="UniProtKB-EC"/>
</dbReference>
<dbReference type="GO" id="GO:0005506">
    <property type="term" value="F:iron ion binding"/>
    <property type="evidence" value="ECO:0007669"/>
    <property type="project" value="UniProtKB-UniRule"/>
</dbReference>
<dbReference type="GO" id="GO:0016765">
    <property type="term" value="F:transferase activity, transferring alkyl or aryl (other than methyl) groups"/>
    <property type="evidence" value="ECO:0007669"/>
    <property type="project" value="InterPro"/>
</dbReference>
<dbReference type="CDD" id="cd01335">
    <property type="entry name" value="Radical_SAM"/>
    <property type="match status" value="1"/>
</dbReference>
<dbReference type="Gene3D" id="3.20.20.70">
    <property type="entry name" value="Aldolase class I"/>
    <property type="match status" value="1"/>
</dbReference>
<dbReference type="HAMAP" id="MF_01611">
    <property type="entry name" value="FO_synth_sub1"/>
    <property type="match status" value="1"/>
</dbReference>
<dbReference type="InterPro" id="IPR013785">
    <property type="entry name" value="Aldolase_TIM"/>
</dbReference>
<dbReference type="InterPro" id="IPR019939">
    <property type="entry name" value="CofG_family"/>
</dbReference>
<dbReference type="InterPro" id="IPR006638">
    <property type="entry name" value="Elp3/MiaA/NifB-like_rSAM"/>
</dbReference>
<dbReference type="InterPro" id="IPR034405">
    <property type="entry name" value="F420"/>
</dbReference>
<dbReference type="InterPro" id="IPR007197">
    <property type="entry name" value="rSAM"/>
</dbReference>
<dbReference type="NCBIfam" id="TIGR03550">
    <property type="entry name" value="F420_cofG"/>
    <property type="match status" value="1"/>
</dbReference>
<dbReference type="NCBIfam" id="NF004884">
    <property type="entry name" value="PRK06245.1"/>
    <property type="match status" value="1"/>
</dbReference>
<dbReference type="PANTHER" id="PTHR43076:SF15">
    <property type="entry name" value="7,8-DIDEMETHYL-8-HYDROXY-5-DEAZARIBOFLAVIN SYNTHASE"/>
    <property type="match status" value="1"/>
</dbReference>
<dbReference type="PANTHER" id="PTHR43076">
    <property type="entry name" value="FO SYNTHASE (COFH)"/>
    <property type="match status" value="1"/>
</dbReference>
<dbReference type="Pfam" id="PF04055">
    <property type="entry name" value="Radical_SAM"/>
    <property type="match status" value="1"/>
</dbReference>
<dbReference type="SFLD" id="SFLDF00294">
    <property type="entry name" value="7_8-didemethyl-8-hydroxy-5-dea"/>
    <property type="match status" value="1"/>
</dbReference>
<dbReference type="SFLD" id="SFLDG01388">
    <property type="entry name" value="7_8-didemethyl-8-hydroxy-5-dea"/>
    <property type="match status" value="1"/>
</dbReference>
<dbReference type="SMART" id="SM00729">
    <property type="entry name" value="Elp3"/>
    <property type="match status" value="1"/>
</dbReference>
<dbReference type="SUPFAM" id="SSF102114">
    <property type="entry name" value="Radical SAM enzymes"/>
    <property type="match status" value="1"/>
</dbReference>
<dbReference type="PROSITE" id="PS51918">
    <property type="entry name" value="RADICAL_SAM"/>
    <property type="match status" value="1"/>
</dbReference>
<accession>Q466A4</accession>